<gene>
    <name evidence="1" type="primary">acpP</name>
    <name type="ordered locus">Tery_0452</name>
</gene>
<proteinExistence type="inferred from homology"/>
<feature type="chain" id="PRO_1000066714" description="Acyl carrier protein">
    <location>
        <begin position="1"/>
        <end position="88"/>
    </location>
</feature>
<feature type="domain" description="Carrier" evidence="2">
    <location>
        <begin position="4"/>
        <end position="79"/>
    </location>
</feature>
<feature type="modified residue" description="O-(pantetheine 4'-phosphoryl)serine" evidence="2">
    <location>
        <position position="39"/>
    </location>
</feature>
<dbReference type="EMBL" id="CP000393">
    <property type="protein sequence ID" value="ABG49911.1"/>
    <property type="molecule type" value="Genomic_DNA"/>
</dbReference>
<dbReference type="RefSeq" id="WP_011610307.1">
    <property type="nucleotide sequence ID" value="NC_008312.1"/>
</dbReference>
<dbReference type="SMR" id="Q119B3"/>
<dbReference type="STRING" id="203124.Tery_0452"/>
<dbReference type="KEGG" id="ter:Tery_0452"/>
<dbReference type="eggNOG" id="COG0236">
    <property type="taxonomic scope" value="Bacteria"/>
</dbReference>
<dbReference type="HOGENOM" id="CLU_108696_5_1_3"/>
<dbReference type="OrthoDB" id="9804551at2"/>
<dbReference type="UniPathway" id="UPA00094"/>
<dbReference type="GO" id="GO:0005829">
    <property type="term" value="C:cytosol"/>
    <property type="evidence" value="ECO:0007669"/>
    <property type="project" value="TreeGrafter"/>
</dbReference>
<dbReference type="GO" id="GO:0016020">
    <property type="term" value="C:membrane"/>
    <property type="evidence" value="ECO:0007669"/>
    <property type="project" value="GOC"/>
</dbReference>
<dbReference type="GO" id="GO:0000035">
    <property type="term" value="F:acyl binding"/>
    <property type="evidence" value="ECO:0007669"/>
    <property type="project" value="TreeGrafter"/>
</dbReference>
<dbReference type="GO" id="GO:0000036">
    <property type="term" value="F:acyl carrier activity"/>
    <property type="evidence" value="ECO:0007669"/>
    <property type="project" value="UniProtKB-UniRule"/>
</dbReference>
<dbReference type="GO" id="GO:0009245">
    <property type="term" value="P:lipid A biosynthetic process"/>
    <property type="evidence" value="ECO:0007669"/>
    <property type="project" value="TreeGrafter"/>
</dbReference>
<dbReference type="FunFam" id="1.10.1200.10:FF:000001">
    <property type="entry name" value="Acyl carrier protein"/>
    <property type="match status" value="1"/>
</dbReference>
<dbReference type="Gene3D" id="1.10.1200.10">
    <property type="entry name" value="ACP-like"/>
    <property type="match status" value="1"/>
</dbReference>
<dbReference type="HAMAP" id="MF_01217">
    <property type="entry name" value="Acyl_carrier"/>
    <property type="match status" value="1"/>
</dbReference>
<dbReference type="InterPro" id="IPR003231">
    <property type="entry name" value="ACP"/>
</dbReference>
<dbReference type="InterPro" id="IPR036736">
    <property type="entry name" value="ACP-like_sf"/>
</dbReference>
<dbReference type="InterPro" id="IPR009081">
    <property type="entry name" value="PP-bd_ACP"/>
</dbReference>
<dbReference type="InterPro" id="IPR006162">
    <property type="entry name" value="Ppantetheine_attach_site"/>
</dbReference>
<dbReference type="NCBIfam" id="TIGR00517">
    <property type="entry name" value="acyl_carrier"/>
    <property type="match status" value="1"/>
</dbReference>
<dbReference type="NCBIfam" id="NF002148">
    <property type="entry name" value="PRK00982.1-2"/>
    <property type="match status" value="1"/>
</dbReference>
<dbReference type="NCBIfam" id="NF002149">
    <property type="entry name" value="PRK00982.1-3"/>
    <property type="match status" value="1"/>
</dbReference>
<dbReference type="NCBIfam" id="NF002150">
    <property type="entry name" value="PRK00982.1-4"/>
    <property type="match status" value="1"/>
</dbReference>
<dbReference type="NCBIfam" id="NF002151">
    <property type="entry name" value="PRK00982.1-5"/>
    <property type="match status" value="1"/>
</dbReference>
<dbReference type="NCBIfam" id="NF009104">
    <property type="entry name" value="PRK12449.1"/>
    <property type="match status" value="1"/>
</dbReference>
<dbReference type="PANTHER" id="PTHR20863">
    <property type="entry name" value="ACYL CARRIER PROTEIN"/>
    <property type="match status" value="1"/>
</dbReference>
<dbReference type="PANTHER" id="PTHR20863:SF76">
    <property type="entry name" value="CARRIER DOMAIN-CONTAINING PROTEIN"/>
    <property type="match status" value="1"/>
</dbReference>
<dbReference type="Pfam" id="PF00550">
    <property type="entry name" value="PP-binding"/>
    <property type="match status" value="1"/>
</dbReference>
<dbReference type="SUPFAM" id="SSF47336">
    <property type="entry name" value="ACP-like"/>
    <property type="match status" value="1"/>
</dbReference>
<dbReference type="PROSITE" id="PS50075">
    <property type="entry name" value="CARRIER"/>
    <property type="match status" value="1"/>
</dbReference>
<dbReference type="PROSITE" id="PS00012">
    <property type="entry name" value="PHOSPHOPANTETHEINE"/>
    <property type="match status" value="1"/>
</dbReference>
<sequence length="88" mass="9747">MTNDSVPAKVMEIVAKQLEKDQKEVTPESSFANDLGADSLDTVELVMALEEEFGTEIPDEEAEKITTVQAAVDYIQNKMDDGKIKLEK</sequence>
<name>ACP_TRIEI</name>
<comment type="function">
    <text evidence="1">Carrier of the growing fatty acid chain in fatty acid biosynthesis.</text>
</comment>
<comment type="pathway">
    <text evidence="1">Lipid metabolism; fatty acid biosynthesis.</text>
</comment>
<comment type="subcellular location">
    <subcellularLocation>
        <location evidence="1">Cytoplasm</location>
    </subcellularLocation>
</comment>
<comment type="PTM">
    <text evidence="1">4'-phosphopantetheine is transferred from CoA to a specific serine of apo-ACP by AcpS. This modification is essential for activity because fatty acids are bound in thioester linkage to the sulfhydryl of the prosthetic group.</text>
</comment>
<comment type="similarity">
    <text evidence="1">Belongs to the acyl carrier protein (ACP) family.</text>
</comment>
<evidence type="ECO:0000255" key="1">
    <source>
        <dbReference type="HAMAP-Rule" id="MF_01217"/>
    </source>
</evidence>
<evidence type="ECO:0000255" key="2">
    <source>
        <dbReference type="PROSITE-ProRule" id="PRU00258"/>
    </source>
</evidence>
<organism>
    <name type="scientific">Trichodesmium erythraeum (strain IMS101)</name>
    <dbReference type="NCBI Taxonomy" id="203124"/>
    <lineage>
        <taxon>Bacteria</taxon>
        <taxon>Bacillati</taxon>
        <taxon>Cyanobacteriota</taxon>
        <taxon>Cyanophyceae</taxon>
        <taxon>Oscillatoriophycideae</taxon>
        <taxon>Oscillatoriales</taxon>
        <taxon>Microcoleaceae</taxon>
        <taxon>Trichodesmium</taxon>
    </lineage>
</organism>
<keyword id="KW-0963">Cytoplasm</keyword>
<keyword id="KW-0275">Fatty acid biosynthesis</keyword>
<keyword id="KW-0276">Fatty acid metabolism</keyword>
<keyword id="KW-0444">Lipid biosynthesis</keyword>
<keyword id="KW-0443">Lipid metabolism</keyword>
<keyword id="KW-0596">Phosphopantetheine</keyword>
<keyword id="KW-0597">Phosphoprotein</keyword>
<reference key="1">
    <citation type="journal article" date="2015" name="Proc. Natl. Acad. Sci. U.S.A.">
        <title>Trichodesmium genome maintains abundant, widespread noncoding DNA in situ, despite oligotrophic lifestyle.</title>
        <authorList>
            <person name="Walworth N."/>
            <person name="Pfreundt U."/>
            <person name="Nelson W.C."/>
            <person name="Mincer T."/>
            <person name="Heidelberg J.F."/>
            <person name="Fu F."/>
            <person name="Waterbury J.B."/>
            <person name="Glavina del Rio T."/>
            <person name="Goodwin L."/>
            <person name="Kyrpides N.C."/>
            <person name="Land M.L."/>
            <person name="Woyke T."/>
            <person name="Hutchins D.A."/>
            <person name="Hess W.R."/>
            <person name="Webb E.A."/>
        </authorList>
    </citation>
    <scope>NUCLEOTIDE SEQUENCE [LARGE SCALE GENOMIC DNA]</scope>
    <source>
        <strain>IMS101</strain>
    </source>
</reference>
<accession>Q119B3</accession>
<protein>
    <recommendedName>
        <fullName evidence="1">Acyl carrier protein</fullName>
        <shortName evidence="1">ACP</shortName>
    </recommendedName>
</protein>